<proteinExistence type="inferred from homology"/>
<sequence>MISKIKKDLENKISKTIKELALKQNITLDKINIIMKKPPKSELGDLSILIFEFSKILKLSTSVIIEEIIKQIGKKYTTKSMGAYLNIKFNRKEYIKDIIKKVNEQKEKYGINNVLKNKRIIIEFSSPNTNKPLHVGHLRNDIIGESLSRILKASGGQVTKINLINDRGTHICKTMLAYKKFGNNTTPELSLKKGDHLIGDFYVKYNEYAKNNKMAEDEIQQLLCKWEEGDEETVKLWKKLNKWAIEGIKETYKLTNITFDKIYLESEIFKIGREIILQGLEKGLCYKREDGAICINIPIETNEMTDQKFKQKVLLRANGTSIYLTQDLGNILTRKNEFDFDEMIYVVGSEQIHHFKTLFYVADKLGITKENNLVHLSYGMVNLPTGKMKSREGHVIDADNLIHDLSESTMIEIKKRHSNEQDSKKIALNISLGAIHYYLLKTAIHKDILFNKEESLSFTGNSGPYIQYVGARINSILDKYDELNLPSKNINFDLLINENEWAIIKIISEFEEYIIKAAKDRNPSIIVNYSYLLAKSFSAYYQDTKIIDKDNPELTHARTDLSKAVLQTIKNCMHLLNIPYMKKM</sequence>
<organism>
    <name type="scientific">Borrelia turicatae (strain 91E135)</name>
    <dbReference type="NCBI Taxonomy" id="314724"/>
    <lineage>
        <taxon>Bacteria</taxon>
        <taxon>Pseudomonadati</taxon>
        <taxon>Spirochaetota</taxon>
        <taxon>Spirochaetia</taxon>
        <taxon>Spirochaetales</taxon>
        <taxon>Borreliaceae</taxon>
        <taxon>Borrelia</taxon>
    </lineage>
</organism>
<feature type="chain" id="PRO_1000198876" description="Arginine--tRNA ligase">
    <location>
        <begin position="1"/>
        <end position="584"/>
    </location>
</feature>
<feature type="short sequence motif" description="'HIGH' region">
    <location>
        <begin position="127"/>
        <end position="137"/>
    </location>
</feature>
<gene>
    <name evidence="1" type="primary">argS</name>
    <name type="ordered locus">BT0594</name>
</gene>
<protein>
    <recommendedName>
        <fullName evidence="1">Arginine--tRNA ligase</fullName>
        <ecNumber evidence="1">6.1.1.19</ecNumber>
    </recommendedName>
    <alternativeName>
        <fullName evidence="1">Arginyl-tRNA synthetase</fullName>
        <shortName evidence="1">ArgRS</shortName>
    </alternativeName>
</protein>
<keyword id="KW-0030">Aminoacyl-tRNA synthetase</keyword>
<keyword id="KW-0067">ATP-binding</keyword>
<keyword id="KW-0963">Cytoplasm</keyword>
<keyword id="KW-0436">Ligase</keyword>
<keyword id="KW-0547">Nucleotide-binding</keyword>
<keyword id="KW-0648">Protein biosynthesis</keyword>
<keyword id="KW-1185">Reference proteome</keyword>
<dbReference type="EC" id="6.1.1.19" evidence="1"/>
<dbReference type="EMBL" id="CP000049">
    <property type="protein sequence ID" value="AAX17917.1"/>
    <property type="molecule type" value="Genomic_DNA"/>
</dbReference>
<dbReference type="RefSeq" id="WP_011772535.1">
    <property type="nucleotide sequence ID" value="NC_008710.1"/>
</dbReference>
<dbReference type="SMR" id="A1R025"/>
<dbReference type="KEGG" id="btu:BT0594"/>
<dbReference type="eggNOG" id="COG0018">
    <property type="taxonomic scope" value="Bacteria"/>
</dbReference>
<dbReference type="HOGENOM" id="CLU_006406_6_1_12"/>
<dbReference type="Proteomes" id="UP000001205">
    <property type="component" value="Chromosome"/>
</dbReference>
<dbReference type="GO" id="GO:0005737">
    <property type="term" value="C:cytoplasm"/>
    <property type="evidence" value="ECO:0007669"/>
    <property type="project" value="UniProtKB-SubCell"/>
</dbReference>
<dbReference type="GO" id="GO:0004814">
    <property type="term" value="F:arginine-tRNA ligase activity"/>
    <property type="evidence" value="ECO:0007669"/>
    <property type="project" value="UniProtKB-UniRule"/>
</dbReference>
<dbReference type="GO" id="GO:0005524">
    <property type="term" value="F:ATP binding"/>
    <property type="evidence" value="ECO:0007669"/>
    <property type="project" value="UniProtKB-UniRule"/>
</dbReference>
<dbReference type="GO" id="GO:0006420">
    <property type="term" value="P:arginyl-tRNA aminoacylation"/>
    <property type="evidence" value="ECO:0007669"/>
    <property type="project" value="UniProtKB-UniRule"/>
</dbReference>
<dbReference type="CDD" id="cd00671">
    <property type="entry name" value="ArgRS_core"/>
    <property type="match status" value="1"/>
</dbReference>
<dbReference type="FunFam" id="1.10.730.10:FF:000006">
    <property type="entry name" value="Arginyl-tRNA synthetase 2, mitochondrial"/>
    <property type="match status" value="1"/>
</dbReference>
<dbReference type="Gene3D" id="3.30.1360.70">
    <property type="entry name" value="Arginyl tRNA synthetase N-terminal domain"/>
    <property type="match status" value="1"/>
</dbReference>
<dbReference type="Gene3D" id="3.40.50.620">
    <property type="entry name" value="HUPs"/>
    <property type="match status" value="1"/>
</dbReference>
<dbReference type="Gene3D" id="1.10.730.10">
    <property type="entry name" value="Isoleucyl-tRNA Synthetase, Domain 1"/>
    <property type="match status" value="1"/>
</dbReference>
<dbReference type="HAMAP" id="MF_00123">
    <property type="entry name" value="Arg_tRNA_synth"/>
    <property type="match status" value="1"/>
</dbReference>
<dbReference type="InterPro" id="IPR001412">
    <property type="entry name" value="aa-tRNA-synth_I_CS"/>
</dbReference>
<dbReference type="InterPro" id="IPR001278">
    <property type="entry name" value="Arg-tRNA-ligase"/>
</dbReference>
<dbReference type="InterPro" id="IPR005148">
    <property type="entry name" value="Arg-tRNA-synth_N"/>
</dbReference>
<dbReference type="InterPro" id="IPR036695">
    <property type="entry name" value="Arg-tRNA-synth_N_sf"/>
</dbReference>
<dbReference type="InterPro" id="IPR035684">
    <property type="entry name" value="ArgRS_core"/>
</dbReference>
<dbReference type="InterPro" id="IPR008909">
    <property type="entry name" value="DALR_anticod-bd"/>
</dbReference>
<dbReference type="InterPro" id="IPR014729">
    <property type="entry name" value="Rossmann-like_a/b/a_fold"/>
</dbReference>
<dbReference type="InterPro" id="IPR009080">
    <property type="entry name" value="tRNAsynth_Ia_anticodon-bd"/>
</dbReference>
<dbReference type="NCBIfam" id="TIGR00456">
    <property type="entry name" value="argS"/>
    <property type="match status" value="1"/>
</dbReference>
<dbReference type="PANTHER" id="PTHR11956:SF5">
    <property type="entry name" value="ARGININE--TRNA LIGASE, CYTOPLASMIC"/>
    <property type="match status" value="1"/>
</dbReference>
<dbReference type="PANTHER" id="PTHR11956">
    <property type="entry name" value="ARGINYL-TRNA SYNTHETASE"/>
    <property type="match status" value="1"/>
</dbReference>
<dbReference type="Pfam" id="PF03485">
    <property type="entry name" value="Arg_tRNA_synt_N"/>
    <property type="match status" value="1"/>
</dbReference>
<dbReference type="Pfam" id="PF05746">
    <property type="entry name" value="DALR_1"/>
    <property type="match status" value="1"/>
</dbReference>
<dbReference type="Pfam" id="PF00750">
    <property type="entry name" value="tRNA-synt_1d"/>
    <property type="match status" value="1"/>
</dbReference>
<dbReference type="PRINTS" id="PR01038">
    <property type="entry name" value="TRNASYNTHARG"/>
</dbReference>
<dbReference type="SMART" id="SM01016">
    <property type="entry name" value="Arg_tRNA_synt_N"/>
    <property type="match status" value="1"/>
</dbReference>
<dbReference type="SMART" id="SM00836">
    <property type="entry name" value="DALR_1"/>
    <property type="match status" value="1"/>
</dbReference>
<dbReference type="SUPFAM" id="SSF47323">
    <property type="entry name" value="Anticodon-binding domain of a subclass of class I aminoacyl-tRNA synthetases"/>
    <property type="match status" value="1"/>
</dbReference>
<dbReference type="SUPFAM" id="SSF55190">
    <property type="entry name" value="Arginyl-tRNA synthetase (ArgRS), N-terminal 'additional' domain"/>
    <property type="match status" value="1"/>
</dbReference>
<dbReference type="SUPFAM" id="SSF52374">
    <property type="entry name" value="Nucleotidylyl transferase"/>
    <property type="match status" value="1"/>
</dbReference>
<dbReference type="PROSITE" id="PS00178">
    <property type="entry name" value="AA_TRNA_LIGASE_I"/>
    <property type="match status" value="1"/>
</dbReference>
<name>SYR_BORT9</name>
<reference key="1">
    <citation type="submission" date="2004-12" db="EMBL/GenBank/DDBJ databases">
        <title>The genome sequence of Borrelia hermsii and Borrelia turicatae: comparative analysis of two agents of endemic N. America relapsing fever.</title>
        <authorList>
            <person name="Porcella S.F."/>
            <person name="Raffel S.J."/>
            <person name="Schrumpf M.E."/>
            <person name="Montgomery B."/>
            <person name="Smith T."/>
            <person name="Schwan T.G."/>
        </authorList>
    </citation>
    <scope>NUCLEOTIDE SEQUENCE [LARGE SCALE GENOMIC DNA]</scope>
    <source>
        <strain>91E135</strain>
    </source>
</reference>
<evidence type="ECO:0000255" key="1">
    <source>
        <dbReference type="HAMAP-Rule" id="MF_00123"/>
    </source>
</evidence>
<accession>A1R025</accession>
<comment type="catalytic activity">
    <reaction evidence="1">
        <text>tRNA(Arg) + L-arginine + ATP = L-arginyl-tRNA(Arg) + AMP + diphosphate</text>
        <dbReference type="Rhea" id="RHEA:20301"/>
        <dbReference type="Rhea" id="RHEA-COMP:9658"/>
        <dbReference type="Rhea" id="RHEA-COMP:9673"/>
        <dbReference type="ChEBI" id="CHEBI:30616"/>
        <dbReference type="ChEBI" id="CHEBI:32682"/>
        <dbReference type="ChEBI" id="CHEBI:33019"/>
        <dbReference type="ChEBI" id="CHEBI:78442"/>
        <dbReference type="ChEBI" id="CHEBI:78513"/>
        <dbReference type="ChEBI" id="CHEBI:456215"/>
        <dbReference type="EC" id="6.1.1.19"/>
    </reaction>
</comment>
<comment type="subunit">
    <text evidence="1">Monomer.</text>
</comment>
<comment type="subcellular location">
    <subcellularLocation>
        <location evidence="1">Cytoplasm</location>
    </subcellularLocation>
</comment>
<comment type="similarity">
    <text evidence="1">Belongs to the class-I aminoacyl-tRNA synthetase family.</text>
</comment>